<accession>A2QUM3</accession>
<comment type="function">
    <text evidence="1">Probable component of the endoplasmic reticulum-associated degradation (ERAD) pathway.</text>
</comment>
<comment type="similarity">
    <text evidence="4">Belongs to the LCL2 family.</text>
</comment>
<evidence type="ECO:0000250" key="1"/>
<evidence type="ECO:0000255" key="2"/>
<evidence type="ECO:0000256" key="3">
    <source>
        <dbReference type="SAM" id="MobiDB-lite"/>
    </source>
</evidence>
<evidence type="ECO:0000305" key="4"/>
<dbReference type="EMBL" id="AM270209">
    <property type="protein sequence ID" value="CAL00343.1"/>
    <property type="molecule type" value="Genomic_DNA"/>
</dbReference>
<dbReference type="RefSeq" id="XP_001393925.1">
    <property type="nucleotide sequence ID" value="XM_001393888.1"/>
</dbReference>
<dbReference type="EnsemblFungi" id="CAL00343">
    <property type="protein sequence ID" value="CAL00343"/>
    <property type="gene ID" value="An09g06130"/>
</dbReference>
<dbReference type="GeneID" id="4984147"/>
<dbReference type="KEGG" id="ang:An09g06130"/>
<dbReference type="VEuPathDB" id="FungiDB:An09g06130"/>
<dbReference type="HOGENOM" id="CLU_142363_0_0_1"/>
<dbReference type="Proteomes" id="UP000006706">
    <property type="component" value="Chromosome 1L"/>
</dbReference>
<dbReference type="GO" id="GO:0036503">
    <property type="term" value="P:ERAD pathway"/>
    <property type="evidence" value="ECO:0007669"/>
    <property type="project" value="TreeGrafter"/>
</dbReference>
<dbReference type="CDD" id="cd23996">
    <property type="entry name" value="LCL2-like"/>
    <property type="match status" value="1"/>
</dbReference>
<dbReference type="InterPro" id="IPR034543">
    <property type="entry name" value="LCL2"/>
</dbReference>
<dbReference type="PANTHER" id="PTHR38425">
    <property type="entry name" value="LONG CHRONOLOGICAL LIFESPAN PROTEIN 2"/>
    <property type="match status" value="1"/>
</dbReference>
<dbReference type="PANTHER" id="PTHR38425:SF1">
    <property type="entry name" value="LONG CHRONOLOGICAL LIFESPAN PROTEIN 2"/>
    <property type="match status" value="1"/>
</dbReference>
<reference key="1">
    <citation type="journal article" date="2007" name="Nat. Biotechnol.">
        <title>Genome sequencing and analysis of the versatile cell factory Aspergillus niger CBS 513.88.</title>
        <authorList>
            <person name="Pel H.J."/>
            <person name="de Winde J.H."/>
            <person name="Archer D.B."/>
            <person name="Dyer P.S."/>
            <person name="Hofmann G."/>
            <person name="Schaap P.J."/>
            <person name="Turner G."/>
            <person name="de Vries R.P."/>
            <person name="Albang R."/>
            <person name="Albermann K."/>
            <person name="Andersen M.R."/>
            <person name="Bendtsen J.D."/>
            <person name="Benen J.A.E."/>
            <person name="van den Berg M."/>
            <person name="Breestraat S."/>
            <person name="Caddick M.X."/>
            <person name="Contreras R."/>
            <person name="Cornell M."/>
            <person name="Coutinho P.M."/>
            <person name="Danchin E.G.J."/>
            <person name="Debets A.J.M."/>
            <person name="Dekker P."/>
            <person name="van Dijck P.W.M."/>
            <person name="van Dijk A."/>
            <person name="Dijkhuizen L."/>
            <person name="Driessen A.J.M."/>
            <person name="d'Enfert C."/>
            <person name="Geysens S."/>
            <person name="Goosen C."/>
            <person name="Groot G.S.P."/>
            <person name="de Groot P.W.J."/>
            <person name="Guillemette T."/>
            <person name="Henrissat B."/>
            <person name="Herweijer M."/>
            <person name="van den Hombergh J.P.T.W."/>
            <person name="van den Hondel C.A.M.J.J."/>
            <person name="van der Heijden R.T.J.M."/>
            <person name="van der Kaaij R.M."/>
            <person name="Klis F.M."/>
            <person name="Kools H.J."/>
            <person name="Kubicek C.P."/>
            <person name="van Kuyk P.A."/>
            <person name="Lauber J."/>
            <person name="Lu X."/>
            <person name="van der Maarel M.J.E.C."/>
            <person name="Meulenberg R."/>
            <person name="Menke H."/>
            <person name="Mortimer M.A."/>
            <person name="Nielsen J."/>
            <person name="Oliver S.G."/>
            <person name="Olsthoorn M."/>
            <person name="Pal K."/>
            <person name="van Peij N.N.M.E."/>
            <person name="Ram A.F.J."/>
            <person name="Rinas U."/>
            <person name="Roubos J.A."/>
            <person name="Sagt C.M.J."/>
            <person name="Schmoll M."/>
            <person name="Sun J."/>
            <person name="Ussery D."/>
            <person name="Varga J."/>
            <person name="Vervecken W."/>
            <person name="van de Vondervoort P.J.J."/>
            <person name="Wedler H."/>
            <person name="Woesten H.A.B."/>
            <person name="Zeng A.-P."/>
            <person name="van Ooyen A.J.J."/>
            <person name="Visser J."/>
            <person name="Stam H."/>
        </authorList>
    </citation>
    <scope>NUCLEOTIDE SEQUENCE [LARGE SCALE GENOMIC DNA]</scope>
    <source>
        <strain>ATCC MYA-4892 / CBS 513.88 / FGSC A1513</strain>
    </source>
</reference>
<feature type="signal peptide" evidence="2">
    <location>
        <begin position="1"/>
        <end position="20"/>
    </location>
</feature>
<feature type="chain" id="PRO_5000220482" description="Long chronological lifespan protein 2">
    <location>
        <begin position="21"/>
        <end position="125"/>
    </location>
</feature>
<feature type="region of interest" description="Disordered" evidence="3">
    <location>
        <begin position="35"/>
        <end position="54"/>
    </location>
</feature>
<feature type="compositionally biased region" description="Polar residues" evidence="3">
    <location>
        <begin position="40"/>
        <end position="54"/>
    </location>
</feature>
<organism>
    <name type="scientific">Aspergillus niger (strain ATCC MYA-4892 / CBS 513.88 / FGSC A1513)</name>
    <dbReference type="NCBI Taxonomy" id="425011"/>
    <lineage>
        <taxon>Eukaryota</taxon>
        <taxon>Fungi</taxon>
        <taxon>Dikarya</taxon>
        <taxon>Ascomycota</taxon>
        <taxon>Pezizomycotina</taxon>
        <taxon>Eurotiomycetes</taxon>
        <taxon>Eurotiomycetidae</taxon>
        <taxon>Eurotiales</taxon>
        <taxon>Aspergillaceae</taxon>
        <taxon>Aspergillus</taxon>
        <taxon>Aspergillus subgen. Circumdati</taxon>
    </lineage>
</organism>
<gene>
    <name type="primary">lcl2</name>
    <name type="ORF">An09g06130</name>
</gene>
<proteinExistence type="inferred from homology"/>
<keyword id="KW-1185">Reference proteome</keyword>
<keyword id="KW-0732">Signal</keyword>
<sequence>MFSWIRLLGALLLLASVAHAQFQFFEHMFGGGGGGGGHQGRQQAAQNVPSDSSRYQSQWDSAHCDKYLCPGTLACVHFPHHCPCPHPDVEEKVELGEGSAVCVSKGGYKEGEAARKIELARKGLL</sequence>
<protein>
    <recommendedName>
        <fullName>Long chronological lifespan protein 2</fullName>
    </recommendedName>
</protein>
<name>LCL2_ASPNC</name>